<evidence type="ECO:0000255" key="1">
    <source>
        <dbReference type="HAMAP-Rule" id="MF_00607"/>
    </source>
</evidence>
<proteinExistence type="inferred from homology"/>
<name>RSMA_NEIMF</name>
<gene>
    <name evidence="1" type="primary">rsmA</name>
    <name evidence="1" type="synonym">ksgA</name>
    <name type="ordered locus">NMC0648</name>
</gene>
<reference key="1">
    <citation type="journal article" date="2007" name="PLoS Genet.">
        <title>Meningococcal genetic variation mechanisms viewed through comparative analysis of serogroup C strain FAM18.</title>
        <authorList>
            <person name="Bentley S.D."/>
            <person name="Vernikos G.S."/>
            <person name="Snyder L.A.S."/>
            <person name="Churcher C."/>
            <person name="Arrowsmith C."/>
            <person name="Chillingworth T."/>
            <person name="Cronin A."/>
            <person name="Davis P.H."/>
            <person name="Holroyd N.E."/>
            <person name="Jagels K."/>
            <person name="Maddison M."/>
            <person name="Moule S."/>
            <person name="Rabbinowitsch E."/>
            <person name="Sharp S."/>
            <person name="Unwin L."/>
            <person name="Whitehead S."/>
            <person name="Quail M.A."/>
            <person name="Achtman M."/>
            <person name="Barrell B.G."/>
            <person name="Saunders N.J."/>
            <person name="Parkhill J."/>
        </authorList>
    </citation>
    <scope>NUCLEOTIDE SEQUENCE [LARGE SCALE GENOMIC DNA]</scope>
    <source>
        <strain>ATCC 700532 / DSM 15464 / FAM18</strain>
    </source>
</reference>
<keyword id="KW-0963">Cytoplasm</keyword>
<keyword id="KW-0489">Methyltransferase</keyword>
<keyword id="KW-0694">RNA-binding</keyword>
<keyword id="KW-0698">rRNA processing</keyword>
<keyword id="KW-0949">S-adenosyl-L-methionine</keyword>
<keyword id="KW-0808">Transferase</keyword>
<accession>A1KSW0</accession>
<dbReference type="EC" id="2.1.1.182" evidence="1"/>
<dbReference type="EMBL" id="AM421808">
    <property type="protein sequence ID" value="CAM09941.1"/>
    <property type="molecule type" value="Genomic_DNA"/>
</dbReference>
<dbReference type="RefSeq" id="WP_002221264.1">
    <property type="nucleotide sequence ID" value="NC_008767.1"/>
</dbReference>
<dbReference type="SMR" id="A1KSW0"/>
<dbReference type="KEGG" id="nmc:NMC0648"/>
<dbReference type="HOGENOM" id="CLU_041220_0_1_4"/>
<dbReference type="Proteomes" id="UP000002286">
    <property type="component" value="Chromosome"/>
</dbReference>
<dbReference type="GO" id="GO:0005829">
    <property type="term" value="C:cytosol"/>
    <property type="evidence" value="ECO:0007669"/>
    <property type="project" value="TreeGrafter"/>
</dbReference>
<dbReference type="GO" id="GO:0052908">
    <property type="term" value="F:16S rRNA (adenine(1518)-N(6)/adenine(1519)-N(6))-dimethyltransferase activity"/>
    <property type="evidence" value="ECO:0007669"/>
    <property type="project" value="UniProtKB-EC"/>
</dbReference>
<dbReference type="GO" id="GO:0003723">
    <property type="term" value="F:RNA binding"/>
    <property type="evidence" value="ECO:0007669"/>
    <property type="project" value="UniProtKB-KW"/>
</dbReference>
<dbReference type="FunFam" id="1.10.8.100:FF:000001">
    <property type="entry name" value="Ribosomal RNA small subunit methyltransferase A"/>
    <property type="match status" value="1"/>
</dbReference>
<dbReference type="FunFam" id="3.40.50.150:FF:000006">
    <property type="entry name" value="Ribosomal RNA small subunit methyltransferase A"/>
    <property type="match status" value="1"/>
</dbReference>
<dbReference type="Gene3D" id="1.10.8.100">
    <property type="entry name" value="Ribosomal RNA adenine dimethylase-like, domain 2"/>
    <property type="match status" value="1"/>
</dbReference>
<dbReference type="Gene3D" id="3.40.50.150">
    <property type="entry name" value="Vaccinia Virus protein VP39"/>
    <property type="match status" value="1"/>
</dbReference>
<dbReference type="HAMAP" id="MF_00607">
    <property type="entry name" value="16SrRNA_methyltr_A"/>
    <property type="match status" value="1"/>
</dbReference>
<dbReference type="InterPro" id="IPR001737">
    <property type="entry name" value="KsgA/Erm"/>
</dbReference>
<dbReference type="InterPro" id="IPR023165">
    <property type="entry name" value="rRNA_Ade_diMease-like_C"/>
</dbReference>
<dbReference type="InterPro" id="IPR020596">
    <property type="entry name" value="rRNA_Ade_Mease_Trfase_CS"/>
</dbReference>
<dbReference type="InterPro" id="IPR020598">
    <property type="entry name" value="rRNA_Ade_methylase_Trfase_N"/>
</dbReference>
<dbReference type="InterPro" id="IPR011530">
    <property type="entry name" value="rRNA_adenine_dimethylase"/>
</dbReference>
<dbReference type="InterPro" id="IPR029063">
    <property type="entry name" value="SAM-dependent_MTases_sf"/>
</dbReference>
<dbReference type="NCBIfam" id="TIGR00755">
    <property type="entry name" value="ksgA"/>
    <property type="match status" value="1"/>
</dbReference>
<dbReference type="PANTHER" id="PTHR11727">
    <property type="entry name" value="DIMETHYLADENOSINE TRANSFERASE"/>
    <property type="match status" value="1"/>
</dbReference>
<dbReference type="PANTHER" id="PTHR11727:SF7">
    <property type="entry name" value="DIMETHYLADENOSINE TRANSFERASE-RELATED"/>
    <property type="match status" value="1"/>
</dbReference>
<dbReference type="Pfam" id="PF00398">
    <property type="entry name" value="RrnaAD"/>
    <property type="match status" value="1"/>
</dbReference>
<dbReference type="SMART" id="SM00650">
    <property type="entry name" value="rADc"/>
    <property type="match status" value="1"/>
</dbReference>
<dbReference type="SUPFAM" id="SSF53335">
    <property type="entry name" value="S-adenosyl-L-methionine-dependent methyltransferases"/>
    <property type="match status" value="1"/>
</dbReference>
<dbReference type="PROSITE" id="PS01131">
    <property type="entry name" value="RRNA_A_DIMETH"/>
    <property type="match status" value="1"/>
</dbReference>
<dbReference type="PROSITE" id="PS51689">
    <property type="entry name" value="SAM_RNA_A_N6_MT"/>
    <property type="match status" value="1"/>
</dbReference>
<feature type="chain" id="PRO_1000056642" description="Ribosomal RNA small subunit methyltransferase A">
    <location>
        <begin position="1"/>
        <end position="259"/>
    </location>
</feature>
<feature type="binding site" evidence="1">
    <location>
        <position position="13"/>
    </location>
    <ligand>
        <name>S-adenosyl-L-methionine</name>
        <dbReference type="ChEBI" id="CHEBI:59789"/>
    </ligand>
</feature>
<feature type="binding site" evidence="1">
    <location>
        <position position="15"/>
    </location>
    <ligand>
        <name>S-adenosyl-L-methionine</name>
        <dbReference type="ChEBI" id="CHEBI:59789"/>
    </ligand>
</feature>
<feature type="binding site" evidence="1">
    <location>
        <position position="40"/>
    </location>
    <ligand>
        <name>S-adenosyl-L-methionine</name>
        <dbReference type="ChEBI" id="CHEBI:59789"/>
    </ligand>
</feature>
<feature type="binding site" evidence="1">
    <location>
        <position position="61"/>
    </location>
    <ligand>
        <name>S-adenosyl-L-methionine</name>
        <dbReference type="ChEBI" id="CHEBI:59789"/>
    </ligand>
</feature>
<feature type="binding site" evidence="1">
    <location>
        <position position="85"/>
    </location>
    <ligand>
        <name>S-adenosyl-L-methionine</name>
        <dbReference type="ChEBI" id="CHEBI:59789"/>
    </ligand>
</feature>
<feature type="binding site" evidence="1">
    <location>
        <position position="103"/>
    </location>
    <ligand>
        <name>S-adenosyl-L-methionine</name>
        <dbReference type="ChEBI" id="CHEBI:59789"/>
    </ligand>
</feature>
<organism>
    <name type="scientific">Neisseria meningitidis serogroup C / serotype 2a (strain ATCC 700532 / DSM 15464 / FAM18)</name>
    <dbReference type="NCBI Taxonomy" id="272831"/>
    <lineage>
        <taxon>Bacteria</taxon>
        <taxon>Pseudomonadati</taxon>
        <taxon>Pseudomonadota</taxon>
        <taxon>Betaproteobacteria</taxon>
        <taxon>Neisseriales</taxon>
        <taxon>Neisseriaceae</taxon>
        <taxon>Neisseria</taxon>
    </lineage>
</organism>
<sequence>MKEHKARKRFGQNFLQDTRIISDIVNAVRPQADDVVIEIGPGLAAITEPLAKKLNRLHVVEIDRDIVCRLKTLPFADKLVIHEGDVLQFDFNGIAGKKKIVGNLPYNISTPLLFKLAEVADDVVDMHFMLQKEVVERMVAAPKSNDYGRLGVMLQYFFDMEMLIDVPPESFDPAPKVDSAVVRMIPVKHRIGKADDFEHFAKLVKLAFHQRRKTIRNNLKELAGDDDLQAVGINPQDRAEHIAPEKYVALSNYLAGKAV</sequence>
<protein>
    <recommendedName>
        <fullName evidence="1">Ribosomal RNA small subunit methyltransferase A</fullName>
        <ecNumber evidence="1">2.1.1.182</ecNumber>
    </recommendedName>
    <alternativeName>
        <fullName evidence="1">16S rRNA (adenine(1518)-N(6)/adenine(1519)-N(6))-dimethyltransferase</fullName>
    </alternativeName>
    <alternativeName>
        <fullName evidence="1">16S rRNA dimethyladenosine transferase</fullName>
    </alternativeName>
    <alternativeName>
        <fullName evidence="1">16S rRNA dimethylase</fullName>
    </alternativeName>
    <alternativeName>
        <fullName evidence="1">S-adenosylmethionine-6-N', N'-adenosyl(rRNA) dimethyltransferase</fullName>
    </alternativeName>
</protein>
<comment type="function">
    <text evidence="1">Specifically dimethylates two adjacent adenosines (A1518 and A1519) in the loop of a conserved hairpin near the 3'-end of 16S rRNA in the 30S particle. May play a critical role in biogenesis of 30S subunits.</text>
</comment>
<comment type="catalytic activity">
    <reaction evidence="1">
        <text>adenosine(1518)/adenosine(1519) in 16S rRNA + 4 S-adenosyl-L-methionine = N(6)-dimethyladenosine(1518)/N(6)-dimethyladenosine(1519) in 16S rRNA + 4 S-adenosyl-L-homocysteine + 4 H(+)</text>
        <dbReference type="Rhea" id="RHEA:19609"/>
        <dbReference type="Rhea" id="RHEA-COMP:10232"/>
        <dbReference type="Rhea" id="RHEA-COMP:10233"/>
        <dbReference type="ChEBI" id="CHEBI:15378"/>
        <dbReference type="ChEBI" id="CHEBI:57856"/>
        <dbReference type="ChEBI" id="CHEBI:59789"/>
        <dbReference type="ChEBI" id="CHEBI:74411"/>
        <dbReference type="ChEBI" id="CHEBI:74493"/>
        <dbReference type="EC" id="2.1.1.182"/>
    </reaction>
</comment>
<comment type="subcellular location">
    <subcellularLocation>
        <location evidence="1">Cytoplasm</location>
    </subcellularLocation>
</comment>
<comment type="similarity">
    <text evidence="1">Belongs to the class I-like SAM-binding methyltransferase superfamily. rRNA adenine N(6)-methyltransferase family. RsmA subfamily.</text>
</comment>